<gene>
    <name type="primary">fliE</name>
    <name type="synonym">fla AI</name>
    <name type="synonym">flaN</name>
    <name type="ordered locus">b1937</name>
    <name type="ordered locus">JW1921</name>
</gene>
<keyword id="KW-0975">Bacterial flagellum</keyword>
<keyword id="KW-1185">Reference proteome</keyword>
<comment type="subcellular location">
    <subcellularLocation>
        <location evidence="1">Bacterial flagellum basal body</location>
    </subcellularLocation>
</comment>
<comment type="similarity">
    <text evidence="2">Belongs to the FliE family.</text>
</comment>
<name>FLIE_ECOLI</name>
<organism>
    <name type="scientific">Escherichia coli (strain K12)</name>
    <dbReference type="NCBI Taxonomy" id="83333"/>
    <lineage>
        <taxon>Bacteria</taxon>
        <taxon>Pseudomonadati</taxon>
        <taxon>Pseudomonadota</taxon>
        <taxon>Gammaproteobacteria</taxon>
        <taxon>Enterobacterales</taxon>
        <taxon>Enterobacteriaceae</taxon>
        <taxon>Escherichia</taxon>
    </lineage>
</organism>
<sequence>MSAIQGIEGVISQLQATAMSARAQESLPQPTISFAGQLHAALDRISDTQTAARTQAEKFTLGEPGVALNDVMTDMQKASVSMQMGIQVRNKLVAAYQEVMSMQV</sequence>
<feature type="initiator methionine" description="Removed" evidence="1">
    <location>
        <position position="1"/>
    </location>
</feature>
<feature type="chain" id="PRO_0000105542" description="Flagellar hook-basal body complex protein FliE">
    <location>
        <begin position="2"/>
        <end position="104"/>
    </location>
</feature>
<accession>P0A8T5</accession>
<accession>P25797</accession>
<dbReference type="EMBL" id="M84992">
    <property type="protein sequence ID" value="AAA23800.1"/>
    <property type="molecule type" value="Genomic_DNA"/>
</dbReference>
<dbReference type="EMBL" id="U00096">
    <property type="protein sequence ID" value="AAC75004.1"/>
    <property type="molecule type" value="Genomic_DNA"/>
</dbReference>
<dbReference type="EMBL" id="AP009048">
    <property type="protein sequence ID" value="BAA15760.1"/>
    <property type="molecule type" value="Genomic_DNA"/>
</dbReference>
<dbReference type="EMBL" id="L13279">
    <property type="protein sequence ID" value="AAA82580.1"/>
    <property type="molecule type" value="Genomic_DNA"/>
</dbReference>
<dbReference type="PIR" id="A42376">
    <property type="entry name" value="A42376"/>
</dbReference>
<dbReference type="RefSeq" id="NP_416447.1">
    <property type="nucleotide sequence ID" value="NC_000913.3"/>
</dbReference>
<dbReference type="RefSeq" id="WP_001274299.1">
    <property type="nucleotide sequence ID" value="NZ_LN832404.1"/>
</dbReference>
<dbReference type="SMR" id="P0A8T5"/>
<dbReference type="ComplexPortal" id="CPX-5887">
    <property type="entry name" value="Flagellar basal-body rod complex"/>
</dbReference>
<dbReference type="FunCoup" id="P0A8T5">
    <property type="interactions" value="69"/>
</dbReference>
<dbReference type="IntAct" id="P0A8T5">
    <property type="interactions" value="2"/>
</dbReference>
<dbReference type="STRING" id="511145.b1937"/>
<dbReference type="PaxDb" id="511145-b1937"/>
<dbReference type="EnsemblBacteria" id="AAC75004">
    <property type="protein sequence ID" value="AAC75004"/>
    <property type="gene ID" value="b1937"/>
</dbReference>
<dbReference type="GeneID" id="93775248"/>
<dbReference type="GeneID" id="946446"/>
<dbReference type="KEGG" id="ecj:JW1921"/>
<dbReference type="KEGG" id="eco:b1937"/>
<dbReference type="KEGG" id="ecoc:C3026_10975"/>
<dbReference type="PATRIC" id="fig|1411691.4.peg.314"/>
<dbReference type="EchoBASE" id="EB1322"/>
<dbReference type="eggNOG" id="COG1677">
    <property type="taxonomic scope" value="Bacteria"/>
</dbReference>
<dbReference type="HOGENOM" id="CLU_147249_0_2_6"/>
<dbReference type="InParanoid" id="P0A8T5"/>
<dbReference type="OMA" id="NDVMIDM"/>
<dbReference type="OrthoDB" id="8909229at2"/>
<dbReference type="PhylomeDB" id="P0A8T5"/>
<dbReference type="BioCyc" id="EcoCyc:EG11346-MONOMER"/>
<dbReference type="PRO" id="PR:P0A8T5"/>
<dbReference type="Proteomes" id="UP000000625">
    <property type="component" value="Chromosome"/>
</dbReference>
<dbReference type="GO" id="GO:0009288">
    <property type="term" value="C:bacterial-type flagellum"/>
    <property type="evidence" value="ECO:0000303"/>
    <property type="project" value="ComplexPortal"/>
</dbReference>
<dbReference type="GO" id="GO:0009425">
    <property type="term" value="C:bacterial-type flagellum basal body"/>
    <property type="evidence" value="ECO:0000266"/>
    <property type="project" value="EcoCyc"/>
</dbReference>
<dbReference type="GO" id="GO:0030694">
    <property type="term" value="C:bacterial-type flagellum basal body, rod"/>
    <property type="evidence" value="ECO:0000303"/>
    <property type="project" value="ComplexPortal"/>
</dbReference>
<dbReference type="GO" id="GO:0003774">
    <property type="term" value="F:cytoskeletal motor activity"/>
    <property type="evidence" value="ECO:0007669"/>
    <property type="project" value="InterPro"/>
</dbReference>
<dbReference type="GO" id="GO:0005198">
    <property type="term" value="F:structural molecule activity"/>
    <property type="evidence" value="ECO:0007669"/>
    <property type="project" value="InterPro"/>
</dbReference>
<dbReference type="GO" id="GO:0044780">
    <property type="term" value="P:bacterial-type flagellum assembly"/>
    <property type="evidence" value="ECO:0000318"/>
    <property type="project" value="GO_Central"/>
</dbReference>
<dbReference type="GO" id="GO:0071973">
    <property type="term" value="P:bacterial-type flagellum-dependent cell motility"/>
    <property type="evidence" value="ECO:0000303"/>
    <property type="project" value="ComplexPortal"/>
</dbReference>
<dbReference type="GO" id="GO:0006935">
    <property type="term" value="P:chemotaxis"/>
    <property type="evidence" value="ECO:0000303"/>
    <property type="project" value="ComplexPortal"/>
</dbReference>
<dbReference type="HAMAP" id="MF_00724">
    <property type="entry name" value="FliE"/>
    <property type="match status" value="1"/>
</dbReference>
<dbReference type="InterPro" id="IPR001624">
    <property type="entry name" value="FliE"/>
</dbReference>
<dbReference type="NCBIfam" id="TIGR00205">
    <property type="entry name" value="fliE"/>
    <property type="match status" value="1"/>
</dbReference>
<dbReference type="PANTHER" id="PTHR34653">
    <property type="match status" value="1"/>
</dbReference>
<dbReference type="PANTHER" id="PTHR34653:SF1">
    <property type="entry name" value="FLAGELLAR HOOK-BASAL BODY COMPLEX PROTEIN FLIE"/>
    <property type="match status" value="1"/>
</dbReference>
<dbReference type="Pfam" id="PF02049">
    <property type="entry name" value="FliE"/>
    <property type="match status" value="1"/>
</dbReference>
<dbReference type="PRINTS" id="PR01006">
    <property type="entry name" value="FLGHOOKFLIE"/>
</dbReference>
<reference key="1">
    <citation type="journal article" date="1992" name="J. Bacteriol.">
        <title>Characterization of the fliE genes of Escherichia coli and Salmonella typhimurium and identification of the FliE protein as a component of the flagellar hook-basal body complex.</title>
        <authorList>
            <person name="Mueller V."/>
            <person name="Jones C.J."/>
            <person name="Kawagishi I."/>
            <person name="Aizawa S."/>
            <person name="Macnab R.M."/>
        </authorList>
    </citation>
    <scope>NUCLEOTIDE SEQUENCE [GENOMIC DNA]</scope>
    <source>
        <strain>JA11</strain>
    </source>
</reference>
<reference key="2">
    <citation type="journal article" date="1996" name="DNA Res.">
        <title>A 460-kb DNA sequence of the Escherichia coli K-12 genome corresponding to the 40.1-50.0 min region on the linkage map.</title>
        <authorList>
            <person name="Itoh T."/>
            <person name="Aiba H."/>
            <person name="Baba T."/>
            <person name="Fujita K."/>
            <person name="Hayashi K."/>
            <person name="Inada T."/>
            <person name="Isono K."/>
            <person name="Kasai H."/>
            <person name="Kimura S."/>
            <person name="Kitakawa M."/>
            <person name="Kitagawa M."/>
            <person name="Makino K."/>
            <person name="Miki T."/>
            <person name="Mizobuchi K."/>
            <person name="Mori H."/>
            <person name="Mori T."/>
            <person name="Motomura K."/>
            <person name="Nakade S."/>
            <person name="Nakamura Y."/>
            <person name="Nashimoto H."/>
            <person name="Nishio Y."/>
            <person name="Oshima T."/>
            <person name="Saito N."/>
            <person name="Sampei G."/>
            <person name="Seki Y."/>
            <person name="Sivasundaram S."/>
            <person name="Tagami H."/>
            <person name="Takeda J."/>
            <person name="Takemoto K."/>
            <person name="Wada C."/>
            <person name="Yamamoto Y."/>
            <person name="Horiuchi T."/>
        </authorList>
    </citation>
    <scope>NUCLEOTIDE SEQUENCE [LARGE SCALE GENOMIC DNA]</scope>
    <source>
        <strain>K12 / W3110 / ATCC 27325 / DSM 5911</strain>
    </source>
</reference>
<reference key="3">
    <citation type="journal article" date="1997" name="Science">
        <title>The complete genome sequence of Escherichia coli K-12.</title>
        <authorList>
            <person name="Blattner F.R."/>
            <person name="Plunkett G. III"/>
            <person name="Bloch C.A."/>
            <person name="Perna N.T."/>
            <person name="Burland V."/>
            <person name="Riley M."/>
            <person name="Collado-Vides J."/>
            <person name="Glasner J.D."/>
            <person name="Rode C.K."/>
            <person name="Mayhew G.F."/>
            <person name="Gregor J."/>
            <person name="Davis N.W."/>
            <person name="Kirkpatrick H.A."/>
            <person name="Goeden M.A."/>
            <person name="Rose D.J."/>
            <person name="Mau B."/>
            <person name="Shao Y."/>
        </authorList>
    </citation>
    <scope>NUCLEOTIDE SEQUENCE [LARGE SCALE GENOMIC DNA]</scope>
    <source>
        <strain>K12 / MG1655 / ATCC 47076</strain>
    </source>
</reference>
<reference key="4">
    <citation type="journal article" date="2006" name="Mol. Syst. Biol.">
        <title>Highly accurate genome sequences of Escherichia coli K-12 strains MG1655 and W3110.</title>
        <authorList>
            <person name="Hayashi K."/>
            <person name="Morooka N."/>
            <person name="Yamamoto Y."/>
            <person name="Fujita K."/>
            <person name="Isono K."/>
            <person name="Choi S."/>
            <person name="Ohtsubo E."/>
            <person name="Baba T."/>
            <person name="Wanner B.L."/>
            <person name="Mori H."/>
            <person name="Horiuchi T."/>
        </authorList>
    </citation>
    <scope>NUCLEOTIDE SEQUENCE [LARGE SCALE GENOMIC DNA]</scope>
    <source>
        <strain>K12 / W3110 / ATCC 27325 / DSM 5911</strain>
    </source>
</reference>
<reference key="5">
    <citation type="journal article" date="1993" name="J. Gen. Microbiol.">
        <title>Organization of the Escherichia coli and Salmonella typhimurium chromosomes between flagellar regions IIIa and IIIb, including a large non-coding region.</title>
        <authorList>
            <person name="Raha M."/>
            <person name="Kihara M."/>
            <person name="Kawagishi I."/>
            <person name="Macnab R.M."/>
        </authorList>
    </citation>
    <scope>NUCLEOTIDE SEQUENCE [GENOMIC DNA] OF 94-104</scope>
    <source>
        <strain>JA11</strain>
    </source>
</reference>
<proteinExistence type="inferred from homology"/>
<evidence type="ECO:0000250" key="1"/>
<evidence type="ECO:0000305" key="2"/>
<protein>
    <recommendedName>
        <fullName>Flagellar hook-basal body complex protein FliE</fullName>
    </recommendedName>
</protein>